<proteinExistence type="inferred from homology"/>
<organism>
    <name type="scientific">Listeria monocytogenes serotype 4a (strain HCC23)</name>
    <dbReference type="NCBI Taxonomy" id="552536"/>
    <lineage>
        <taxon>Bacteria</taxon>
        <taxon>Bacillati</taxon>
        <taxon>Bacillota</taxon>
        <taxon>Bacilli</taxon>
        <taxon>Bacillales</taxon>
        <taxon>Listeriaceae</taxon>
        <taxon>Listeria</taxon>
    </lineage>
</organism>
<comment type="function">
    <text evidence="1">Necessary for normal cell division and for the maintenance of normal septation.</text>
</comment>
<comment type="cofactor">
    <cofactor evidence="1">
        <name>Mg(2+)</name>
        <dbReference type="ChEBI" id="CHEBI:18420"/>
    </cofactor>
</comment>
<comment type="similarity">
    <text evidence="1">Belongs to the TRAFAC class TrmE-Era-EngA-EngB-Septin-like GTPase superfamily. EngB GTPase family.</text>
</comment>
<feature type="chain" id="PRO_1000189928" description="Probable GTP-binding protein EngB">
    <location>
        <begin position="1"/>
        <end position="194"/>
    </location>
</feature>
<feature type="domain" description="EngB-type G" evidence="1">
    <location>
        <begin position="22"/>
        <end position="194"/>
    </location>
</feature>
<feature type="binding site" evidence="1">
    <location>
        <begin position="30"/>
        <end position="37"/>
    </location>
    <ligand>
        <name>GTP</name>
        <dbReference type="ChEBI" id="CHEBI:37565"/>
    </ligand>
</feature>
<feature type="binding site" evidence="1">
    <location>
        <position position="37"/>
    </location>
    <ligand>
        <name>Mg(2+)</name>
        <dbReference type="ChEBI" id="CHEBI:18420"/>
    </ligand>
</feature>
<feature type="binding site" evidence="1">
    <location>
        <begin position="57"/>
        <end position="61"/>
    </location>
    <ligand>
        <name>GTP</name>
        <dbReference type="ChEBI" id="CHEBI:37565"/>
    </ligand>
</feature>
<feature type="binding site" evidence="1">
    <location>
        <position position="59"/>
    </location>
    <ligand>
        <name>Mg(2+)</name>
        <dbReference type="ChEBI" id="CHEBI:18420"/>
    </ligand>
</feature>
<feature type="binding site" evidence="1">
    <location>
        <begin position="75"/>
        <end position="78"/>
    </location>
    <ligand>
        <name>GTP</name>
        <dbReference type="ChEBI" id="CHEBI:37565"/>
    </ligand>
</feature>
<feature type="binding site" evidence="1">
    <location>
        <begin position="142"/>
        <end position="145"/>
    </location>
    <ligand>
        <name>GTP</name>
        <dbReference type="ChEBI" id="CHEBI:37565"/>
    </ligand>
</feature>
<feature type="binding site" evidence="1">
    <location>
        <begin position="174"/>
        <end position="176"/>
    </location>
    <ligand>
        <name>GTP</name>
        <dbReference type="ChEBI" id="CHEBI:37565"/>
    </ligand>
</feature>
<name>ENGB_LISMH</name>
<accession>B8DHJ0</accession>
<protein>
    <recommendedName>
        <fullName evidence="1">Probable GTP-binding protein EngB</fullName>
    </recommendedName>
</protein>
<gene>
    <name evidence="1" type="primary">engB</name>
    <name type="ordered locus">LMHCC_1011</name>
</gene>
<keyword id="KW-0131">Cell cycle</keyword>
<keyword id="KW-0132">Cell division</keyword>
<keyword id="KW-0342">GTP-binding</keyword>
<keyword id="KW-0460">Magnesium</keyword>
<keyword id="KW-0479">Metal-binding</keyword>
<keyword id="KW-0547">Nucleotide-binding</keyword>
<keyword id="KW-0717">Septation</keyword>
<evidence type="ECO:0000255" key="1">
    <source>
        <dbReference type="HAMAP-Rule" id="MF_00321"/>
    </source>
</evidence>
<dbReference type="EMBL" id="CP001175">
    <property type="protein sequence ID" value="ACK39359.1"/>
    <property type="molecule type" value="Genomic_DNA"/>
</dbReference>
<dbReference type="SMR" id="B8DHJ0"/>
<dbReference type="KEGG" id="lmh:LMHCC_1011"/>
<dbReference type="HOGENOM" id="CLU_033732_3_0_9"/>
<dbReference type="GO" id="GO:0005829">
    <property type="term" value="C:cytosol"/>
    <property type="evidence" value="ECO:0007669"/>
    <property type="project" value="TreeGrafter"/>
</dbReference>
<dbReference type="GO" id="GO:0005525">
    <property type="term" value="F:GTP binding"/>
    <property type="evidence" value="ECO:0007669"/>
    <property type="project" value="UniProtKB-UniRule"/>
</dbReference>
<dbReference type="GO" id="GO:0046872">
    <property type="term" value="F:metal ion binding"/>
    <property type="evidence" value="ECO:0007669"/>
    <property type="project" value="UniProtKB-KW"/>
</dbReference>
<dbReference type="GO" id="GO:0000917">
    <property type="term" value="P:division septum assembly"/>
    <property type="evidence" value="ECO:0007669"/>
    <property type="project" value="UniProtKB-KW"/>
</dbReference>
<dbReference type="CDD" id="cd01876">
    <property type="entry name" value="YihA_EngB"/>
    <property type="match status" value="1"/>
</dbReference>
<dbReference type="FunFam" id="3.40.50.300:FF:000098">
    <property type="entry name" value="Probable GTP-binding protein EngB"/>
    <property type="match status" value="1"/>
</dbReference>
<dbReference type="Gene3D" id="3.40.50.300">
    <property type="entry name" value="P-loop containing nucleotide triphosphate hydrolases"/>
    <property type="match status" value="1"/>
</dbReference>
<dbReference type="HAMAP" id="MF_00321">
    <property type="entry name" value="GTPase_EngB"/>
    <property type="match status" value="1"/>
</dbReference>
<dbReference type="InterPro" id="IPR030393">
    <property type="entry name" value="G_ENGB_dom"/>
</dbReference>
<dbReference type="InterPro" id="IPR006073">
    <property type="entry name" value="GTP-bd"/>
</dbReference>
<dbReference type="InterPro" id="IPR019987">
    <property type="entry name" value="GTP-bd_ribosome_bio_YsxC"/>
</dbReference>
<dbReference type="InterPro" id="IPR027417">
    <property type="entry name" value="P-loop_NTPase"/>
</dbReference>
<dbReference type="NCBIfam" id="TIGR03598">
    <property type="entry name" value="GTPase_YsxC"/>
    <property type="match status" value="1"/>
</dbReference>
<dbReference type="PANTHER" id="PTHR11649:SF13">
    <property type="entry name" value="ENGB-TYPE G DOMAIN-CONTAINING PROTEIN"/>
    <property type="match status" value="1"/>
</dbReference>
<dbReference type="PANTHER" id="PTHR11649">
    <property type="entry name" value="MSS1/TRME-RELATED GTP-BINDING PROTEIN"/>
    <property type="match status" value="1"/>
</dbReference>
<dbReference type="Pfam" id="PF01926">
    <property type="entry name" value="MMR_HSR1"/>
    <property type="match status" value="1"/>
</dbReference>
<dbReference type="SUPFAM" id="SSF52540">
    <property type="entry name" value="P-loop containing nucleoside triphosphate hydrolases"/>
    <property type="match status" value="1"/>
</dbReference>
<dbReference type="PROSITE" id="PS51706">
    <property type="entry name" value="G_ENGB"/>
    <property type="match status" value="1"/>
</dbReference>
<sequence>MDVNNVELIISAVRPEQYPETDLPEYALAGRSNVGKSSFINTMIRRKSMARISQKPGKTQTLNFYKIEEALFFVDVPGYGFAKVSKTEREKWGVMIETYITSREQLRGVIQIVDLRHKPTEDDRMMYEFLKYYDIPVIVVATKADKIPRSKWQKNAKIVRETLDFDPDDKFVLFSSETKMGKDEAWQFIKEGME</sequence>
<reference key="1">
    <citation type="journal article" date="2011" name="J. Bacteriol.">
        <title>Genome sequence of lineage III Listeria monocytogenes strain HCC23.</title>
        <authorList>
            <person name="Steele C.L."/>
            <person name="Donaldson J.R."/>
            <person name="Paul D."/>
            <person name="Banes M.M."/>
            <person name="Arick T."/>
            <person name="Bridges S.M."/>
            <person name="Lawrence M.L."/>
        </authorList>
    </citation>
    <scope>NUCLEOTIDE SEQUENCE [LARGE SCALE GENOMIC DNA]</scope>
    <source>
        <strain>HCC23</strain>
    </source>
</reference>